<name>YD491_YEAST</name>
<proteinExistence type="uncertain"/>
<organism>
    <name type="scientific">Saccharomyces cerevisiae (strain ATCC 204508 / S288c)</name>
    <name type="common">Baker's yeast</name>
    <dbReference type="NCBI Taxonomy" id="559292"/>
    <lineage>
        <taxon>Eukaryota</taxon>
        <taxon>Fungi</taxon>
        <taxon>Dikarya</taxon>
        <taxon>Ascomycota</taxon>
        <taxon>Saccharomycotina</taxon>
        <taxon>Saccharomycetes</taxon>
        <taxon>Saccharomycetales</taxon>
        <taxon>Saccharomycetaceae</taxon>
        <taxon>Saccharomyces</taxon>
    </lineage>
</organism>
<keyword id="KW-0472">Membrane</keyword>
<keyword id="KW-0812">Transmembrane</keyword>
<keyword id="KW-1133">Transmembrane helix</keyword>
<gene>
    <name type="ordered locus">YDR491C</name>
</gene>
<reference key="1">
    <citation type="journal article" date="1997" name="Nature">
        <title>The nucleotide sequence of Saccharomyces cerevisiae chromosome IV.</title>
        <authorList>
            <person name="Jacq C."/>
            <person name="Alt-Moerbe J."/>
            <person name="Andre B."/>
            <person name="Arnold W."/>
            <person name="Bahr A."/>
            <person name="Ballesta J.P.G."/>
            <person name="Bargues M."/>
            <person name="Baron L."/>
            <person name="Becker A."/>
            <person name="Biteau N."/>
            <person name="Bloecker H."/>
            <person name="Blugeon C."/>
            <person name="Boskovic J."/>
            <person name="Brandt P."/>
            <person name="Brueckner M."/>
            <person name="Buitrago M.J."/>
            <person name="Coster F."/>
            <person name="Delaveau T."/>
            <person name="del Rey F."/>
            <person name="Dujon B."/>
            <person name="Eide L.G."/>
            <person name="Garcia-Cantalejo J.M."/>
            <person name="Goffeau A."/>
            <person name="Gomez-Peris A."/>
            <person name="Granotier C."/>
            <person name="Hanemann V."/>
            <person name="Hankeln T."/>
            <person name="Hoheisel J.D."/>
            <person name="Jaeger W."/>
            <person name="Jimenez A."/>
            <person name="Jonniaux J.-L."/>
            <person name="Kraemer C."/>
            <person name="Kuester H."/>
            <person name="Laamanen P."/>
            <person name="Legros Y."/>
            <person name="Louis E.J."/>
            <person name="Moeller-Rieker S."/>
            <person name="Monnet A."/>
            <person name="Moro M."/>
            <person name="Mueller-Auer S."/>
            <person name="Nussbaumer B."/>
            <person name="Paricio N."/>
            <person name="Paulin L."/>
            <person name="Perea J."/>
            <person name="Perez-Alonso M."/>
            <person name="Perez-Ortin J.E."/>
            <person name="Pohl T.M."/>
            <person name="Prydz H."/>
            <person name="Purnelle B."/>
            <person name="Rasmussen S.W."/>
            <person name="Remacha M.A."/>
            <person name="Revuelta J.L."/>
            <person name="Rieger M."/>
            <person name="Salom D."/>
            <person name="Saluz H.P."/>
            <person name="Saiz J.E."/>
            <person name="Saren A.-M."/>
            <person name="Schaefer M."/>
            <person name="Scharfe M."/>
            <person name="Schmidt E.R."/>
            <person name="Schneider C."/>
            <person name="Scholler P."/>
            <person name="Schwarz S."/>
            <person name="Soler-Mira A."/>
            <person name="Urrestarazu L.A."/>
            <person name="Verhasselt P."/>
            <person name="Vissers S."/>
            <person name="Voet M."/>
            <person name="Volckaert G."/>
            <person name="Wagner G."/>
            <person name="Wambutt R."/>
            <person name="Wedler E."/>
            <person name="Wedler H."/>
            <person name="Woelfl S."/>
            <person name="Harris D.E."/>
            <person name="Bowman S."/>
            <person name="Brown D."/>
            <person name="Churcher C.M."/>
            <person name="Connor R."/>
            <person name="Dedman K."/>
            <person name="Gentles S."/>
            <person name="Hamlin N."/>
            <person name="Hunt S."/>
            <person name="Jones L."/>
            <person name="McDonald S."/>
            <person name="Murphy L.D."/>
            <person name="Niblett D."/>
            <person name="Odell C."/>
            <person name="Oliver K."/>
            <person name="Rajandream M.A."/>
            <person name="Richards C."/>
            <person name="Shore L."/>
            <person name="Walsh S.V."/>
            <person name="Barrell B.G."/>
            <person name="Dietrich F.S."/>
            <person name="Mulligan J.T."/>
            <person name="Allen E."/>
            <person name="Araujo R."/>
            <person name="Aviles E."/>
            <person name="Berno A."/>
            <person name="Carpenter J."/>
            <person name="Chen E."/>
            <person name="Cherry J.M."/>
            <person name="Chung E."/>
            <person name="Duncan M."/>
            <person name="Hunicke-Smith S."/>
            <person name="Hyman R.W."/>
            <person name="Komp C."/>
            <person name="Lashkari D."/>
            <person name="Lew H."/>
            <person name="Lin D."/>
            <person name="Mosedale D."/>
            <person name="Nakahara K."/>
            <person name="Namath A."/>
            <person name="Oefner P."/>
            <person name="Oh C."/>
            <person name="Petel F.X."/>
            <person name="Roberts D."/>
            <person name="Schramm S."/>
            <person name="Schroeder M."/>
            <person name="Shogren T."/>
            <person name="Shroff N."/>
            <person name="Winant A."/>
            <person name="Yelton M.A."/>
            <person name="Botstein D."/>
            <person name="Davis R.W."/>
            <person name="Johnston M."/>
            <person name="Andrews S."/>
            <person name="Brinkman R."/>
            <person name="Cooper J."/>
            <person name="Ding H."/>
            <person name="Du Z."/>
            <person name="Favello A."/>
            <person name="Fulton L."/>
            <person name="Gattung S."/>
            <person name="Greco T."/>
            <person name="Hallsworth K."/>
            <person name="Hawkins J."/>
            <person name="Hillier L.W."/>
            <person name="Jier M."/>
            <person name="Johnson D."/>
            <person name="Johnston L."/>
            <person name="Kirsten J."/>
            <person name="Kucaba T."/>
            <person name="Langston Y."/>
            <person name="Latreille P."/>
            <person name="Le T."/>
            <person name="Mardis E."/>
            <person name="Menezes S."/>
            <person name="Miller N."/>
            <person name="Nhan M."/>
            <person name="Pauley A."/>
            <person name="Peluso D."/>
            <person name="Rifkin L."/>
            <person name="Riles L."/>
            <person name="Taich A."/>
            <person name="Trevaskis E."/>
            <person name="Vignati D."/>
            <person name="Wilcox L."/>
            <person name="Wohldman P."/>
            <person name="Vaudin M."/>
            <person name="Wilson R."/>
            <person name="Waterston R."/>
            <person name="Albermann K."/>
            <person name="Hani J."/>
            <person name="Heumann K."/>
            <person name="Kleine K."/>
            <person name="Mewes H.-W."/>
            <person name="Zollner A."/>
            <person name="Zaccaria P."/>
        </authorList>
    </citation>
    <scope>NUCLEOTIDE SEQUENCE [LARGE SCALE GENOMIC DNA]</scope>
    <source>
        <strain>ATCC 204508 / S288c</strain>
    </source>
</reference>
<reference key="2">
    <citation type="journal article" date="2014" name="G3 (Bethesda)">
        <title>The reference genome sequence of Saccharomyces cerevisiae: Then and now.</title>
        <authorList>
            <person name="Engel S.R."/>
            <person name="Dietrich F.S."/>
            <person name="Fisk D.G."/>
            <person name="Binkley G."/>
            <person name="Balakrishnan R."/>
            <person name="Costanzo M.C."/>
            <person name="Dwight S.S."/>
            <person name="Hitz B.C."/>
            <person name="Karra K."/>
            <person name="Nash R.S."/>
            <person name="Weng S."/>
            <person name="Wong E.D."/>
            <person name="Lloyd P."/>
            <person name="Skrzypek M.S."/>
            <person name="Miyasato S.R."/>
            <person name="Simison M."/>
            <person name="Cherry J.M."/>
        </authorList>
    </citation>
    <scope>GENOME REANNOTATION</scope>
    <source>
        <strain>ATCC 204508 / S288c</strain>
    </source>
</reference>
<reference key="3">
    <citation type="journal article" date="2007" name="Genome Res.">
        <title>Approaching a complete repository of sequence-verified protein-encoding clones for Saccharomyces cerevisiae.</title>
        <authorList>
            <person name="Hu Y."/>
            <person name="Rolfs A."/>
            <person name="Bhullar B."/>
            <person name="Murthy T.V.S."/>
            <person name="Zhu C."/>
            <person name="Berger M.F."/>
            <person name="Camargo A.A."/>
            <person name="Kelley F."/>
            <person name="McCarron S."/>
            <person name="Jepson D."/>
            <person name="Richardson A."/>
            <person name="Raphael J."/>
            <person name="Moreira D."/>
            <person name="Taycher E."/>
            <person name="Zuo D."/>
            <person name="Mohr S."/>
            <person name="Kane M.F."/>
            <person name="Williamson J."/>
            <person name="Simpson A.J.G."/>
            <person name="Bulyk M.L."/>
            <person name="Harlow E."/>
            <person name="Marsischky G."/>
            <person name="Kolodner R.D."/>
            <person name="LaBaer J."/>
        </authorList>
    </citation>
    <scope>NUCLEOTIDE SEQUENCE [GENOMIC DNA]</scope>
    <source>
        <strain>ATCC 204508 / S288c</strain>
    </source>
</reference>
<comment type="subcellular location">
    <subcellularLocation>
        <location evidence="2">Membrane</location>
        <topology evidence="2">Single-pass membrane protein</topology>
    </subcellularLocation>
</comment>
<comment type="miscellaneous">
    <text evidence="2">Partially overlaps IZH1.</text>
</comment>
<comment type="caution">
    <text evidence="3">Product of a dubious gene prediction unlikely to encode a functional protein. Because of that it is not part of the S.cerevisiae S288c complete/reference proteome set.</text>
</comment>
<feature type="chain" id="PRO_0000299899" description="Putative uncharacterized protein YDR491C">
    <location>
        <begin position="1"/>
        <end position="163"/>
    </location>
</feature>
<feature type="transmembrane region" description="Helical" evidence="1">
    <location>
        <begin position="11"/>
        <end position="31"/>
    </location>
</feature>
<protein>
    <recommendedName>
        <fullName>Putative uncharacterized protein YDR491C</fullName>
    </recommendedName>
</protein>
<accession>Q03418</accession>
<evidence type="ECO:0000255" key="1"/>
<evidence type="ECO:0000305" key="2"/>
<evidence type="ECO:0000305" key="3">
    <source>
    </source>
</evidence>
<sequence length="163" mass="18825">MEALVALQQTLSWFLLLVVVILIFFLLLSCLTQLRRLITKRMTKMENNRKVRNQNHFCKVNIALAELLTVSTDDTDMPLEKKSNSINRRVPTCTYIYMCACVYMSDIYMSNRLSKVFTLIAASIGREYCQIADALQAKKPLKNRWENGLARLSDLRAWTLKVA</sequence>
<dbReference type="EMBL" id="U33050">
    <property type="protein sequence ID" value="AAB64916.1"/>
    <property type="molecule type" value="Genomic_DNA"/>
</dbReference>
<dbReference type="EMBL" id="AY693347">
    <property type="protein sequence ID" value="AAT93366.1"/>
    <property type="molecule type" value="Genomic_DNA"/>
</dbReference>
<dbReference type="PIR" id="S69658">
    <property type="entry name" value="S69658"/>
</dbReference>
<dbReference type="iPTMnet" id="Q03418"/>
<dbReference type="PaxDb" id="4932-YDR491C"/>
<dbReference type="EnsemblFungi" id="YDR491C_mRNA">
    <property type="protein sequence ID" value="YDR491C"/>
    <property type="gene ID" value="YDR491C"/>
</dbReference>
<dbReference type="AGR" id="SGD:S000002899"/>
<dbReference type="SGD" id="S000002899">
    <property type="gene designation" value="YDR491C"/>
</dbReference>
<dbReference type="HOGENOM" id="CLU_138110_0_0_1"/>
<dbReference type="OMA" id="CKVNIAL"/>
<dbReference type="GO" id="GO:0016020">
    <property type="term" value="C:membrane"/>
    <property type="evidence" value="ECO:0007669"/>
    <property type="project" value="UniProtKB-SubCell"/>
</dbReference>